<evidence type="ECO:0000255" key="1">
    <source>
        <dbReference type="HAMAP-Rule" id="MF_00178"/>
    </source>
</evidence>
<organism>
    <name type="scientific">Neisseria meningitidis serogroup C / serotype 2a (strain ATCC 700532 / DSM 15464 / FAM18)</name>
    <dbReference type="NCBI Taxonomy" id="272831"/>
    <lineage>
        <taxon>Bacteria</taxon>
        <taxon>Pseudomonadati</taxon>
        <taxon>Pseudomonadota</taxon>
        <taxon>Betaproteobacteria</taxon>
        <taxon>Neisseriales</taxon>
        <taxon>Neisseriaceae</taxon>
        <taxon>Neisseria</taxon>
    </lineage>
</organism>
<feature type="chain" id="PRO_1000040462" description="6,7-dimethyl-8-ribityllumazine synthase">
    <location>
        <begin position="1"/>
        <end position="158"/>
    </location>
</feature>
<feature type="active site" description="Proton donor" evidence="1">
    <location>
        <position position="88"/>
    </location>
</feature>
<feature type="binding site" evidence="1">
    <location>
        <position position="22"/>
    </location>
    <ligand>
        <name>5-amino-6-(D-ribitylamino)uracil</name>
        <dbReference type="ChEBI" id="CHEBI:15934"/>
    </ligand>
</feature>
<feature type="binding site" evidence="1">
    <location>
        <begin position="56"/>
        <end position="58"/>
    </location>
    <ligand>
        <name>5-amino-6-(D-ribitylamino)uracil</name>
        <dbReference type="ChEBI" id="CHEBI:15934"/>
    </ligand>
</feature>
<feature type="binding site" evidence="1">
    <location>
        <begin position="80"/>
        <end position="82"/>
    </location>
    <ligand>
        <name>5-amino-6-(D-ribitylamino)uracil</name>
        <dbReference type="ChEBI" id="CHEBI:15934"/>
    </ligand>
</feature>
<feature type="binding site" evidence="1">
    <location>
        <begin position="85"/>
        <end position="86"/>
    </location>
    <ligand>
        <name>(2S)-2-hydroxy-3-oxobutyl phosphate</name>
        <dbReference type="ChEBI" id="CHEBI:58830"/>
    </ligand>
</feature>
<feature type="binding site" evidence="1">
    <location>
        <position position="113"/>
    </location>
    <ligand>
        <name>5-amino-6-(D-ribitylamino)uracil</name>
        <dbReference type="ChEBI" id="CHEBI:15934"/>
    </ligand>
</feature>
<feature type="binding site" evidence="1">
    <location>
        <position position="127"/>
    </location>
    <ligand>
        <name>(2S)-2-hydroxy-3-oxobutyl phosphate</name>
        <dbReference type="ChEBI" id="CHEBI:58830"/>
    </ligand>
</feature>
<comment type="function">
    <text evidence="1">Catalyzes the formation of 6,7-dimethyl-8-ribityllumazine by condensation of 5-amino-6-(D-ribitylamino)uracil with 3,4-dihydroxy-2-butanone 4-phosphate. This is the penultimate step in the biosynthesis of riboflavin.</text>
</comment>
<comment type="catalytic activity">
    <reaction evidence="1">
        <text>(2S)-2-hydroxy-3-oxobutyl phosphate + 5-amino-6-(D-ribitylamino)uracil = 6,7-dimethyl-8-(1-D-ribityl)lumazine + phosphate + 2 H2O + H(+)</text>
        <dbReference type="Rhea" id="RHEA:26152"/>
        <dbReference type="ChEBI" id="CHEBI:15377"/>
        <dbReference type="ChEBI" id="CHEBI:15378"/>
        <dbReference type="ChEBI" id="CHEBI:15934"/>
        <dbReference type="ChEBI" id="CHEBI:43474"/>
        <dbReference type="ChEBI" id="CHEBI:58201"/>
        <dbReference type="ChEBI" id="CHEBI:58830"/>
        <dbReference type="EC" id="2.5.1.78"/>
    </reaction>
</comment>
<comment type="pathway">
    <text evidence="1">Cofactor biosynthesis; riboflavin biosynthesis; riboflavin from 2-hydroxy-3-oxobutyl phosphate and 5-amino-6-(D-ribitylamino)uracil: step 1/2.</text>
</comment>
<comment type="similarity">
    <text evidence="1">Belongs to the DMRL synthase family.</text>
</comment>
<reference key="1">
    <citation type="journal article" date="2007" name="PLoS Genet.">
        <title>Meningococcal genetic variation mechanisms viewed through comparative analysis of serogroup C strain FAM18.</title>
        <authorList>
            <person name="Bentley S.D."/>
            <person name="Vernikos G.S."/>
            <person name="Snyder L.A.S."/>
            <person name="Churcher C."/>
            <person name="Arrowsmith C."/>
            <person name="Chillingworth T."/>
            <person name="Cronin A."/>
            <person name="Davis P.H."/>
            <person name="Holroyd N.E."/>
            <person name="Jagels K."/>
            <person name="Maddison M."/>
            <person name="Moule S."/>
            <person name="Rabbinowitsch E."/>
            <person name="Sharp S."/>
            <person name="Unwin L."/>
            <person name="Whitehead S."/>
            <person name="Quail M.A."/>
            <person name="Achtman M."/>
            <person name="Barrell B.G."/>
            <person name="Saunders N.J."/>
            <person name="Parkhill J."/>
        </authorList>
    </citation>
    <scope>NUCLEOTIDE SEQUENCE [LARGE SCALE GENOMIC DNA]</scope>
    <source>
        <strain>ATCC 700532 / DSM 15464 / FAM18</strain>
    </source>
</reference>
<keyword id="KW-0686">Riboflavin biosynthesis</keyword>
<keyword id="KW-0808">Transferase</keyword>
<protein>
    <recommendedName>
        <fullName evidence="1">6,7-dimethyl-8-ribityllumazine synthase</fullName>
        <shortName evidence="1">DMRL synthase</shortName>
        <shortName evidence="1">LS</shortName>
        <shortName evidence="1">Lumazine synthase</shortName>
        <ecNumber evidence="1">2.5.1.78</ecNumber>
    </recommendedName>
</protein>
<dbReference type="EC" id="2.5.1.78" evidence="1"/>
<dbReference type="EMBL" id="AM421808">
    <property type="protein sequence ID" value="CAM09928.1"/>
    <property type="molecule type" value="Genomic_DNA"/>
</dbReference>
<dbReference type="RefSeq" id="WP_002214167.1">
    <property type="nucleotide sequence ID" value="NC_008767.1"/>
</dbReference>
<dbReference type="SMR" id="A1KSU7"/>
<dbReference type="GeneID" id="84020693"/>
<dbReference type="KEGG" id="nmc:NMC0635"/>
<dbReference type="HOGENOM" id="CLU_089358_1_2_4"/>
<dbReference type="UniPathway" id="UPA00275">
    <property type="reaction ID" value="UER00404"/>
</dbReference>
<dbReference type="Proteomes" id="UP000002286">
    <property type="component" value="Chromosome"/>
</dbReference>
<dbReference type="GO" id="GO:0005829">
    <property type="term" value="C:cytosol"/>
    <property type="evidence" value="ECO:0007669"/>
    <property type="project" value="TreeGrafter"/>
</dbReference>
<dbReference type="GO" id="GO:0009349">
    <property type="term" value="C:riboflavin synthase complex"/>
    <property type="evidence" value="ECO:0007669"/>
    <property type="project" value="InterPro"/>
</dbReference>
<dbReference type="GO" id="GO:0000906">
    <property type="term" value="F:6,7-dimethyl-8-ribityllumazine synthase activity"/>
    <property type="evidence" value="ECO:0007669"/>
    <property type="project" value="UniProtKB-UniRule"/>
</dbReference>
<dbReference type="GO" id="GO:0009231">
    <property type="term" value="P:riboflavin biosynthetic process"/>
    <property type="evidence" value="ECO:0007669"/>
    <property type="project" value="UniProtKB-UniRule"/>
</dbReference>
<dbReference type="CDD" id="cd09209">
    <property type="entry name" value="Lumazine_synthase-I"/>
    <property type="match status" value="1"/>
</dbReference>
<dbReference type="FunFam" id="3.40.50.960:FF:000006">
    <property type="entry name" value="6,7-dimethyl-8-ribityllumazine synthase"/>
    <property type="match status" value="1"/>
</dbReference>
<dbReference type="Gene3D" id="3.40.50.960">
    <property type="entry name" value="Lumazine/riboflavin synthase"/>
    <property type="match status" value="1"/>
</dbReference>
<dbReference type="HAMAP" id="MF_00178">
    <property type="entry name" value="Lumazine_synth"/>
    <property type="match status" value="1"/>
</dbReference>
<dbReference type="InterPro" id="IPR034964">
    <property type="entry name" value="LS"/>
</dbReference>
<dbReference type="InterPro" id="IPR002180">
    <property type="entry name" value="LS/RS"/>
</dbReference>
<dbReference type="InterPro" id="IPR036467">
    <property type="entry name" value="LS/RS_sf"/>
</dbReference>
<dbReference type="NCBIfam" id="TIGR00114">
    <property type="entry name" value="lumazine-synth"/>
    <property type="match status" value="1"/>
</dbReference>
<dbReference type="PANTHER" id="PTHR21058:SF0">
    <property type="entry name" value="6,7-DIMETHYL-8-RIBITYLLUMAZINE SYNTHASE"/>
    <property type="match status" value="1"/>
</dbReference>
<dbReference type="PANTHER" id="PTHR21058">
    <property type="entry name" value="6,7-DIMETHYL-8-RIBITYLLUMAZINE SYNTHASE DMRL SYNTHASE LUMAZINE SYNTHASE"/>
    <property type="match status" value="1"/>
</dbReference>
<dbReference type="Pfam" id="PF00885">
    <property type="entry name" value="DMRL_synthase"/>
    <property type="match status" value="1"/>
</dbReference>
<dbReference type="SUPFAM" id="SSF52121">
    <property type="entry name" value="Lumazine synthase"/>
    <property type="match status" value="1"/>
</dbReference>
<proteinExistence type="inferred from homology"/>
<accession>A1KSU7</accession>
<name>RISB_NEIMF</name>
<gene>
    <name evidence="1" type="primary">ribH</name>
    <name type="ordered locus">NMC0635</name>
</gene>
<sequence>MNTIAPNLDGKHLRIGIVQARFTNEIGSEMLKVCCRTLQELGVADENITVATVPGALEIPIALMNLASSEKFDALIAIGVVIRGETYHFELVSNESGAGVSRVALDYNIPIANAVLTTENDAQAIERIEEKASDAAKVAVECANLVNLLLEEQFEDEE</sequence>